<dbReference type="EC" id="6.3.2.1" evidence="1"/>
<dbReference type="EMBL" id="AP009247">
    <property type="protein sequence ID" value="BAF61507.1"/>
    <property type="molecule type" value="Genomic_DNA"/>
</dbReference>
<dbReference type="RefSeq" id="WP_011929777.1">
    <property type="nucleotide sequence ID" value="NC_009465.1"/>
</dbReference>
<dbReference type="SMR" id="A5CX21"/>
<dbReference type="STRING" id="412965.COSY_0385"/>
<dbReference type="KEGG" id="vok:COSY_0385"/>
<dbReference type="eggNOG" id="COG0414">
    <property type="taxonomic scope" value="Bacteria"/>
</dbReference>
<dbReference type="HOGENOM" id="CLU_047148_0_0_6"/>
<dbReference type="OrthoDB" id="9773087at2"/>
<dbReference type="UniPathway" id="UPA00028">
    <property type="reaction ID" value="UER00005"/>
</dbReference>
<dbReference type="Proteomes" id="UP000000247">
    <property type="component" value="Chromosome"/>
</dbReference>
<dbReference type="GO" id="GO:0005829">
    <property type="term" value="C:cytosol"/>
    <property type="evidence" value="ECO:0007669"/>
    <property type="project" value="TreeGrafter"/>
</dbReference>
<dbReference type="GO" id="GO:0005524">
    <property type="term" value="F:ATP binding"/>
    <property type="evidence" value="ECO:0007669"/>
    <property type="project" value="UniProtKB-KW"/>
</dbReference>
<dbReference type="GO" id="GO:0004592">
    <property type="term" value="F:pantoate-beta-alanine ligase activity"/>
    <property type="evidence" value="ECO:0007669"/>
    <property type="project" value="UniProtKB-UniRule"/>
</dbReference>
<dbReference type="GO" id="GO:0015940">
    <property type="term" value="P:pantothenate biosynthetic process"/>
    <property type="evidence" value="ECO:0007669"/>
    <property type="project" value="UniProtKB-UniRule"/>
</dbReference>
<dbReference type="CDD" id="cd00560">
    <property type="entry name" value="PanC"/>
    <property type="match status" value="1"/>
</dbReference>
<dbReference type="Gene3D" id="3.40.50.620">
    <property type="entry name" value="HUPs"/>
    <property type="match status" value="1"/>
</dbReference>
<dbReference type="Gene3D" id="3.30.1300.10">
    <property type="entry name" value="Pantoate-beta-alanine ligase, C-terminal domain"/>
    <property type="match status" value="1"/>
</dbReference>
<dbReference type="HAMAP" id="MF_00158">
    <property type="entry name" value="PanC"/>
    <property type="match status" value="1"/>
</dbReference>
<dbReference type="InterPro" id="IPR004821">
    <property type="entry name" value="Cyt_trans-like"/>
</dbReference>
<dbReference type="InterPro" id="IPR003721">
    <property type="entry name" value="Pantoate_ligase"/>
</dbReference>
<dbReference type="InterPro" id="IPR042176">
    <property type="entry name" value="Pantoate_ligase_C"/>
</dbReference>
<dbReference type="InterPro" id="IPR014729">
    <property type="entry name" value="Rossmann-like_a/b/a_fold"/>
</dbReference>
<dbReference type="NCBIfam" id="TIGR00125">
    <property type="entry name" value="cyt_tran_rel"/>
    <property type="match status" value="1"/>
</dbReference>
<dbReference type="NCBIfam" id="TIGR00018">
    <property type="entry name" value="panC"/>
    <property type="match status" value="1"/>
</dbReference>
<dbReference type="PANTHER" id="PTHR21299">
    <property type="entry name" value="CYTIDYLATE KINASE/PANTOATE-BETA-ALANINE LIGASE"/>
    <property type="match status" value="1"/>
</dbReference>
<dbReference type="PANTHER" id="PTHR21299:SF1">
    <property type="entry name" value="PANTOATE--BETA-ALANINE LIGASE"/>
    <property type="match status" value="1"/>
</dbReference>
<dbReference type="Pfam" id="PF02569">
    <property type="entry name" value="Pantoate_ligase"/>
    <property type="match status" value="1"/>
</dbReference>
<dbReference type="SUPFAM" id="SSF52374">
    <property type="entry name" value="Nucleotidylyl transferase"/>
    <property type="match status" value="1"/>
</dbReference>
<name>PANC_VESOH</name>
<organism>
    <name type="scientific">Vesicomyosocius okutanii subsp. Calyptogena okutanii (strain HA)</name>
    <dbReference type="NCBI Taxonomy" id="412965"/>
    <lineage>
        <taxon>Bacteria</taxon>
        <taxon>Pseudomonadati</taxon>
        <taxon>Pseudomonadota</taxon>
        <taxon>Gammaproteobacteria</taxon>
        <taxon>Candidatus Pseudothioglobaceae</taxon>
        <taxon>Candidatus Vesicomyosocius</taxon>
    </lineage>
</organism>
<accession>A5CX21</accession>
<sequence>MKLCYQNIQITELVNDWHEQEKTIAFIPTMGGLHQGHLSLIDIAKQKADKVVVSIFVNPAQFDKNEDLDSYPRSLNADLVELEENVDSVFVPDVKQIYPNGISKYIDVGMIGRILCGKTRPHFFNGMIQVVEILFEIVRPNVAIFGQKDYQQLLVIKQMVKNLSLDICIESGEIIREKSGLAMSTRNQYLSENDAKIAANLYRILTYVKHEVLQNKKIDVLKKMAESDLKQHFKLDYLEVLDANTLKQITDNTCQIIILSAVFLGSVRLIDNIIFLKKDNYV</sequence>
<evidence type="ECO:0000255" key="1">
    <source>
        <dbReference type="HAMAP-Rule" id="MF_00158"/>
    </source>
</evidence>
<protein>
    <recommendedName>
        <fullName evidence="1">Pantothenate synthetase</fullName>
        <shortName evidence="1">PS</shortName>
        <ecNumber evidence="1">6.3.2.1</ecNumber>
    </recommendedName>
    <alternativeName>
        <fullName evidence="1">Pantoate--beta-alanine ligase</fullName>
    </alternativeName>
    <alternativeName>
        <fullName evidence="1">Pantoate-activating enzyme</fullName>
    </alternativeName>
</protein>
<feature type="chain" id="PRO_0000305574" description="Pantothenate synthetase">
    <location>
        <begin position="1"/>
        <end position="282"/>
    </location>
</feature>
<feature type="active site" description="Proton donor" evidence="1">
    <location>
        <position position="37"/>
    </location>
</feature>
<feature type="binding site" evidence="1">
    <location>
        <begin position="30"/>
        <end position="37"/>
    </location>
    <ligand>
        <name>ATP</name>
        <dbReference type="ChEBI" id="CHEBI:30616"/>
    </ligand>
</feature>
<feature type="binding site" evidence="1">
    <location>
        <position position="61"/>
    </location>
    <ligand>
        <name>(R)-pantoate</name>
        <dbReference type="ChEBI" id="CHEBI:15980"/>
    </ligand>
</feature>
<feature type="binding site" evidence="1">
    <location>
        <position position="61"/>
    </location>
    <ligand>
        <name>beta-alanine</name>
        <dbReference type="ChEBI" id="CHEBI:57966"/>
    </ligand>
</feature>
<feature type="binding site" evidence="1">
    <location>
        <begin position="146"/>
        <end position="149"/>
    </location>
    <ligand>
        <name>ATP</name>
        <dbReference type="ChEBI" id="CHEBI:30616"/>
    </ligand>
</feature>
<feature type="binding site" evidence="1">
    <location>
        <position position="152"/>
    </location>
    <ligand>
        <name>(R)-pantoate</name>
        <dbReference type="ChEBI" id="CHEBI:15980"/>
    </ligand>
</feature>
<feature type="binding site" evidence="1">
    <location>
        <position position="175"/>
    </location>
    <ligand>
        <name>ATP</name>
        <dbReference type="ChEBI" id="CHEBI:30616"/>
    </ligand>
</feature>
<feature type="binding site" evidence="1">
    <location>
        <begin position="183"/>
        <end position="186"/>
    </location>
    <ligand>
        <name>ATP</name>
        <dbReference type="ChEBI" id="CHEBI:30616"/>
    </ligand>
</feature>
<comment type="function">
    <text evidence="1">Catalyzes the condensation of pantoate with beta-alanine in an ATP-dependent reaction via a pantoyl-adenylate intermediate.</text>
</comment>
<comment type="catalytic activity">
    <reaction evidence="1">
        <text>(R)-pantoate + beta-alanine + ATP = (R)-pantothenate + AMP + diphosphate + H(+)</text>
        <dbReference type="Rhea" id="RHEA:10912"/>
        <dbReference type="ChEBI" id="CHEBI:15378"/>
        <dbReference type="ChEBI" id="CHEBI:15980"/>
        <dbReference type="ChEBI" id="CHEBI:29032"/>
        <dbReference type="ChEBI" id="CHEBI:30616"/>
        <dbReference type="ChEBI" id="CHEBI:33019"/>
        <dbReference type="ChEBI" id="CHEBI:57966"/>
        <dbReference type="ChEBI" id="CHEBI:456215"/>
        <dbReference type="EC" id="6.3.2.1"/>
    </reaction>
</comment>
<comment type="pathway">
    <text evidence="1">Cofactor biosynthesis; (R)-pantothenate biosynthesis; (R)-pantothenate from (R)-pantoate and beta-alanine: step 1/1.</text>
</comment>
<comment type="subunit">
    <text evidence="1">Homodimer.</text>
</comment>
<comment type="subcellular location">
    <subcellularLocation>
        <location evidence="1">Cytoplasm</location>
    </subcellularLocation>
</comment>
<comment type="miscellaneous">
    <text evidence="1">The reaction proceeds by a bi uni uni bi ping pong mechanism.</text>
</comment>
<comment type="similarity">
    <text evidence="1">Belongs to the pantothenate synthetase family.</text>
</comment>
<reference key="1">
    <citation type="journal article" date="2007" name="Curr. Biol.">
        <title>Reduced genome of the thioautotrophic intracellular symbiont in a deep-sea clam, Calyptogena okutanii.</title>
        <authorList>
            <person name="Kuwahara H."/>
            <person name="Yoshida T."/>
            <person name="Takaki Y."/>
            <person name="Shimamura S."/>
            <person name="Nishi S."/>
            <person name="Harada M."/>
            <person name="Matsuyama K."/>
            <person name="Takishita K."/>
            <person name="Kawato M."/>
            <person name="Uematsu K."/>
            <person name="Fujiwara Y."/>
            <person name="Sato T."/>
            <person name="Kato C."/>
            <person name="Kitagawa M."/>
            <person name="Kato I."/>
            <person name="Maruyama T."/>
        </authorList>
    </citation>
    <scope>NUCLEOTIDE SEQUENCE [LARGE SCALE GENOMIC DNA]</scope>
    <source>
        <strain>HA</strain>
    </source>
</reference>
<keyword id="KW-0067">ATP-binding</keyword>
<keyword id="KW-0963">Cytoplasm</keyword>
<keyword id="KW-0436">Ligase</keyword>
<keyword id="KW-0547">Nucleotide-binding</keyword>
<keyword id="KW-0566">Pantothenate biosynthesis</keyword>
<keyword id="KW-1185">Reference proteome</keyword>
<gene>
    <name evidence="1" type="primary">panC</name>
    <name type="ordered locus">COSY_0385</name>
</gene>
<proteinExistence type="inferred from homology"/>